<evidence type="ECO:0000255" key="1">
    <source>
        <dbReference type="HAMAP-Rule" id="MF_00797"/>
    </source>
</evidence>
<protein>
    <recommendedName>
        <fullName evidence="1">UPF0335 protein A1C_00850</fullName>
    </recommendedName>
</protein>
<sequence length="78" mass="9013">MSEVVVKEQLEQYISKIERLEQEKADLSQEVKDIFQDASAHGFDVKAMKSILKLKKLDKDKLAEQDAMLELYRDTLGI</sequence>
<reference key="1">
    <citation type="submission" date="2007-09" db="EMBL/GenBank/DDBJ databases">
        <title>Complete genome sequence of Rickettsia akari.</title>
        <authorList>
            <person name="Madan A."/>
            <person name="Fahey J."/>
            <person name="Helton E."/>
            <person name="Ketteman M."/>
            <person name="Madan A."/>
            <person name="Rodrigues S."/>
            <person name="Sanchez A."/>
            <person name="Whiting M."/>
            <person name="Dasch G."/>
            <person name="Eremeeva M."/>
        </authorList>
    </citation>
    <scope>NUCLEOTIDE SEQUENCE [LARGE SCALE GENOMIC DNA]</scope>
    <source>
        <strain>Hartford</strain>
    </source>
</reference>
<name>Y850_RICAH</name>
<proteinExistence type="inferred from homology"/>
<organism>
    <name type="scientific">Rickettsia akari (strain Hartford)</name>
    <dbReference type="NCBI Taxonomy" id="293614"/>
    <lineage>
        <taxon>Bacteria</taxon>
        <taxon>Pseudomonadati</taxon>
        <taxon>Pseudomonadota</taxon>
        <taxon>Alphaproteobacteria</taxon>
        <taxon>Rickettsiales</taxon>
        <taxon>Rickettsiaceae</taxon>
        <taxon>Rickettsieae</taxon>
        <taxon>Rickettsia</taxon>
        <taxon>spotted fever group</taxon>
    </lineage>
</organism>
<comment type="similarity">
    <text evidence="1">Belongs to the UPF0335 family.</text>
</comment>
<dbReference type="EMBL" id="CP000847">
    <property type="protein sequence ID" value="ABV74500.1"/>
    <property type="molecule type" value="Genomic_DNA"/>
</dbReference>
<dbReference type="RefSeq" id="WP_012013370.1">
    <property type="nucleotide sequence ID" value="NC_009881.1"/>
</dbReference>
<dbReference type="SMR" id="A8GM75"/>
<dbReference type="STRING" id="293614.A1C_00850"/>
<dbReference type="KEGG" id="rak:A1C_00850"/>
<dbReference type="eggNOG" id="COG3750">
    <property type="taxonomic scope" value="Bacteria"/>
</dbReference>
<dbReference type="HOGENOM" id="CLU_158651_4_0_5"/>
<dbReference type="Proteomes" id="UP000006830">
    <property type="component" value="Chromosome"/>
</dbReference>
<dbReference type="GO" id="GO:0003677">
    <property type="term" value="F:DNA binding"/>
    <property type="evidence" value="ECO:0007669"/>
    <property type="project" value="InterPro"/>
</dbReference>
<dbReference type="HAMAP" id="MF_00797">
    <property type="entry name" value="UPF0335"/>
    <property type="match status" value="1"/>
</dbReference>
<dbReference type="InterPro" id="IPR018753">
    <property type="entry name" value="GapR-like"/>
</dbReference>
<dbReference type="InterPro" id="IPR046367">
    <property type="entry name" value="GapR-like_DNA-bd"/>
</dbReference>
<dbReference type="NCBIfam" id="NF010247">
    <property type="entry name" value="PRK13694.1"/>
    <property type="match status" value="1"/>
</dbReference>
<dbReference type="Pfam" id="PF10073">
    <property type="entry name" value="GapR_DNA-bd"/>
    <property type="match status" value="1"/>
</dbReference>
<feature type="chain" id="PRO_1000046966" description="UPF0335 protein A1C_00850">
    <location>
        <begin position="1"/>
        <end position="78"/>
    </location>
</feature>
<gene>
    <name type="ordered locus">A1C_00850</name>
</gene>
<accession>A8GM75</accession>